<sequence length="123" mass="13639">MPTIKQLIRNTRQPIRNVTKSPALGGCPQRRGTCTRVYTITPKKPNSALRKVARVRLTSGFEITAYIPGIGHNSQEHSVVLVRGGRVKDLPGVRYHIVRGTLDAVGVKDRQQGRSKYGVKKPK</sequence>
<reference key="1">
    <citation type="submission" date="2005-03" db="EMBL/GenBank/DDBJ databases">
        <title>Complete structure of the chloroplast genome of Populus alba.</title>
        <authorList>
            <person name="Okumura S."/>
            <person name="Yamashita A."/>
            <person name="Kanamoto H."/>
            <person name="Hattori M."/>
            <person name="Takase H."/>
            <person name="Tomizawa K."/>
        </authorList>
    </citation>
    <scope>NUCLEOTIDE SEQUENCE [LARGE SCALE GENOMIC DNA]</scope>
</reference>
<dbReference type="EMBL" id="AP008956">
    <property type="protein sequence ID" value="BAE97229.1"/>
    <property type="molecule type" value="Genomic_DNA"/>
</dbReference>
<dbReference type="EMBL" id="AP008956">
    <property type="protein sequence ID" value="BAE97251.1"/>
    <property type="molecule type" value="Genomic_DNA"/>
</dbReference>
<dbReference type="SMR" id="Q14FB1"/>
<dbReference type="KEGG" id="palz:4178208"/>
<dbReference type="KEGG" id="palz:4178258"/>
<dbReference type="OrthoDB" id="2015at3646"/>
<dbReference type="GO" id="GO:0009507">
    <property type="term" value="C:chloroplast"/>
    <property type="evidence" value="ECO:0007669"/>
    <property type="project" value="UniProtKB-SubCell"/>
</dbReference>
<dbReference type="GO" id="GO:0015935">
    <property type="term" value="C:small ribosomal subunit"/>
    <property type="evidence" value="ECO:0007669"/>
    <property type="project" value="InterPro"/>
</dbReference>
<dbReference type="GO" id="GO:0019843">
    <property type="term" value="F:rRNA binding"/>
    <property type="evidence" value="ECO:0007669"/>
    <property type="project" value="UniProtKB-UniRule"/>
</dbReference>
<dbReference type="GO" id="GO:0003735">
    <property type="term" value="F:structural constituent of ribosome"/>
    <property type="evidence" value="ECO:0007669"/>
    <property type="project" value="InterPro"/>
</dbReference>
<dbReference type="GO" id="GO:0006412">
    <property type="term" value="P:translation"/>
    <property type="evidence" value="ECO:0007669"/>
    <property type="project" value="UniProtKB-UniRule"/>
</dbReference>
<dbReference type="CDD" id="cd03368">
    <property type="entry name" value="Ribosomal_S12"/>
    <property type="match status" value="1"/>
</dbReference>
<dbReference type="FunFam" id="2.40.50.140:FF:000008">
    <property type="entry name" value="30S ribosomal protein S12, chloroplastic"/>
    <property type="match status" value="1"/>
</dbReference>
<dbReference type="Gene3D" id="2.40.50.140">
    <property type="entry name" value="Nucleic acid-binding proteins"/>
    <property type="match status" value="1"/>
</dbReference>
<dbReference type="HAMAP" id="MF_00403_B">
    <property type="entry name" value="Ribosomal_uS12_B"/>
    <property type="match status" value="1"/>
</dbReference>
<dbReference type="InterPro" id="IPR012340">
    <property type="entry name" value="NA-bd_OB-fold"/>
</dbReference>
<dbReference type="InterPro" id="IPR006032">
    <property type="entry name" value="Ribosomal_uS12"/>
</dbReference>
<dbReference type="InterPro" id="IPR005679">
    <property type="entry name" value="Ribosomal_uS12_bac"/>
</dbReference>
<dbReference type="NCBIfam" id="TIGR00981">
    <property type="entry name" value="rpsL_bact"/>
    <property type="match status" value="1"/>
</dbReference>
<dbReference type="PANTHER" id="PTHR11652">
    <property type="entry name" value="30S RIBOSOMAL PROTEIN S12 FAMILY MEMBER"/>
    <property type="match status" value="1"/>
</dbReference>
<dbReference type="Pfam" id="PF00164">
    <property type="entry name" value="Ribosom_S12_S23"/>
    <property type="match status" value="1"/>
</dbReference>
<dbReference type="PIRSF" id="PIRSF002133">
    <property type="entry name" value="Ribosomal_S12/S23"/>
    <property type="match status" value="1"/>
</dbReference>
<dbReference type="PRINTS" id="PR01034">
    <property type="entry name" value="RIBOSOMALS12"/>
</dbReference>
<dbReference type="SUPFAM" id="SSF50249">
    <property type="entry name" value="Nucleic acid-binding proteins"/>
    <property type="match status" value="1"/>
</dbReference>
<dbReference type="PROSITE" id="PS00055">
    <property type="entry name" value="RIBOSOMAL_S12"/>
    <property type="match status" value="1"/>
</dbReference>
<organism>
    <name type="scientific">Populus alba</name>
    <name type="common">White poplar</name>
    <dbReference type="NCBI Taxonomy" id="43335"/>
    <lineage>
        <taxon>Eukaryota</taxon>
        <taxon>Viridiplantae</taxon>
        <taxon>Streptophyta</taxon>
        <taxon>Embryophyta</taxon>
        <taxon>Tracheophyta</taxon>
        <taxon>Spermatophyta</taxon>
        <taxon>Magnoliopsida</taxon>
        <taxon>eudicotyledons</taxon>
        <taxon>Gunneridae</taxon>
        <taxon>Pentapetalae</taxon>
        <taxon>rosids</taxon>
        <taxon>fabids</taxon>
        <taxon>Malpighiales</taxon>
        <taxon>Salicaceae</taxon>
        <taxon>Saliceae</taxon>
        <taxon>Populus</taxon>
    </lineage>
</organism>
<geneLocation type="chloroplast"/>
<comment type="function">
    <text evidence="1">With S4 and S5 plays an important role in translational accuracy. Located at the interface of the 30S and 50S subunits (By similarity).</text>
</comment>
<comment type="subunit">
    <text evidence="1">Part of the 30S ribosomal subunit.</text>
</comment>
<comment type="subcellular location">
    <subcellularLocation>
        <location>Plastid</location>
        <location>Chloroplast</location>
    </subcellularLocation>
</comment>
<comment type="similarity">
    <text evidence="3">Belongs to the universal ribosomal protein uS12 family.</text>
</comment>
<proteinExistence type="inferred from homology"/>
<feature type="chain" id="PRO_0000276626" description="Small ribosomal subunit protein uS12cz/uS12cy">
    <location>
        <begin position="1"/>
        <end position="123"/>
    </location>
</feature>
<gene>
    <name type="primary">rps12-A</name>
</gene>
<gene>
    <name type="primary">rps12-B</name>
</gene>
<accession>Q14FB1</accession>
<protein>
    <recommendedName>
        <fullName evidence="2">Small ribosomal subunit protein uS12cz/uS12cy</fullName>
    </recommendedName>
    <alternativeName>
        <fullName evidence="3">30S ribosomal protein S12, chloroplastic</fullName>
    </alternativeName>
</protein>
<name>RR12_POPAL</name>
<keyword id="KW-0150">Chloroplast</keyword>
<keyword id="KW-0934">Plastid</keyword>
<keyword id="KW-0687">Ribonucleoprotein</keyword>
<keyword id="KW-0689">Ribosomal protein</keyword>
<keyword id="KW-0694">RNA-binding</keyword>
<keyword id="KW-0699">rRNA-binding</keyword>
<evidence type="ECO:0000250" key="1"/>
<evidence type="ECO:0000255" key="2">
    <source>
        <dbReference type="HAMAP-Rule" id="MF_00403"/>
    </source>
</evidence>
<evidence type="ECO:0000305" key="3"/>